<comment type="function">
    <text evidence="1">Catalyzes the irreversible NADPH-dependent deamination of GMP to IMP. It functions in the conversion of nucleobase, nucleoside and nucleotide derivatives of G to A nucleotides, and in maintaining the intracellular balance of A and G nucleotides.</text>
</comment>
<comment type="catalytic activity">
    <reaction evidence="1">
        <text>IMP + NH4(+) + NADP(+) = GMP + NADPH + 2 H(+)</text>
        <dbReference type="Rhea" id="RHEA:17185"/>
        <dbReference type="ChEBI" id="CHEBI:15378"/>
        <dbReference type="ChEBI" id="CHEBI:28938"/>
        <dbReference type="ChEBI" id="CHEBI:57783"/>
        <dbReference type="ChEBI" id="CHEBI:58053"/>
        <dbReference type="ChEBI" id="CHEBI:58115"/>
        <dbReference type="ChEBI" id="CHEBI:58349"/>
        <dbReference type="EC" id="1.7.1.7"/>
    </reaction>
</comment>
<comment type="similarity">
    <text evidence="1">Belongs to the IMPDH/GMPR family. GuaC type 2 subfamily.</text>
</comment>
<sequence>MENVFDYEDIQLIPAKCIVKSRSECDTSVQFGGRTFKLPVVPANMQTIIDEKLAVSLAENGYFYVMHRFEPETRIDFIKDMKARGLFSSISVGVKDEEYAFIEELTRENLTPEYITIDIAHGHSNAVINMIQHIKKHLPDSFVIAGNVGTPEAVRELENAGADATKVGIGPGKVCITKIKTGFGTGGWQLAALRWCAKAASKPIIADGGIRTHGDIAKSVRFGATMVMIGSLFAGHEESPGATIEKDGKLYKEYFGSASEYQKGEKKNVEGKKMYVEHKGAIMDTLTEMEQDLQSSISYAGGNKLDAIRNVDYVIVKNSIFNGDQY</sequence>
<evidence type="ECO:0000255" key="1">
    <source>
        <dbReference type="HAMAP-Rule" id="MF_01511"/>
    </source>
</evidence>
<proteinExistence type="inferred from homology"/>
<keyword id="KW-0521">NADP</keyword>
<keyword id="KW-0560">Oxidoreductase</keyword>
<keyword id="KW-1185">Reference proteome</keyword>
<name>GUAC_BACLD</name>
<protein>
    <recommendedName>
        <fullName evidence="1">GMP reductase</fullName>
        <ecNumber evidence="1">1.7.1.7</ecNumber>
    </recommendedName>
    <alternativeName>
        <fullName evidence="1">Guanosine 5'-monophosphate oxidoreductase</fullName>
        <shortName evidence="1">Guanosine monophosphate reductase</shortName>
    </alternativeName>
</protein>
<organism>
    <name type="scientific">Bacillus licheniformis (strain ATCC 14580 / DSM 13 / JCM 2505 / CCUG 7422 / NBRC 12200 / NCIMB 9375 / NCTC 10341 / NRRL NRS-1264 / Gibson 46)</name>
    <dbReference type="NCBI Taxonomy" id="279010"/>
    <lineage>
        <taxon>Bacteria</taxon>
        <taxon>Bacillati</taxon>
        <taxon>Bacillota</taxon>
        <taxon>Bacilli</taxon>
        <taxon>Bacillales</taxon>
        <taxon>Bacillaceae</taxon>
        <taxon>Bacillus</taxon>
    </lineage>
</organism>
<gene>
    <name evidence="1" type="primary">guaC</name>
    <name type="ordered locus">BLi01200</name>
    <name type="ordered locus">BL05105</name>
</gene>
<reference key="1">
    <citation type="journal article" date="2004" name="J. Mol. Microbiol. Biotechnol.">
        <title>The complete genome sequence of Bacillus licheniformis DSM13, an organism with great industrial potential.</title>
        <authorList>
            <person name="Veith B."/>
            <person name="Herzberg C."/>
            <person name="Steckel S."/>
            <person name="Feesche J."/>
            <person name="Maurer K.H."/>
            <person name="Ehrenreich P."/>
            <person name="Baeumer S."/>
            <person name="Henne A."/>
            <person name="Liesegang H."/>
            <person name="Merkl R."/>
            <person name="Ehrenreich A."/>
            <person name="Gottschalk G."/>
        </authorList>
    </citation>
    <scope>NUCLEOTIDE SEQUENCE [LARGE SCALE GENOMIC DNA]</scope>
    <source>
        <strain>ATCC 14580 / DSM 13 / JCM 2505 / CCUG 7422 / NBRC 12200 / NCIMB 9375 / NCTC 10341 / NRRL NRS-1264 / Gibson 46</strain>
    </source>
</reference>
<reference key="2">
    <citation type="journal article" date="2004" name="Genome Biol.">
        <title>Complete genome sequence of the industrial bacterium Bacillus licheniformis and comparisons with closely related Bacillus species.</title>
        <authorList>
            <person name="Rey M.W."/>
            <person name="Ramaiya P."/>
            <person name="Nelson B.A."/>
            <person name="Brody-Karpin S.D."/>
            <person name="Zaretsky E.J."/>
            <person name="Tang M."/>
            <person name="Lopez de Leon A."/>
            <person name="Xiang H."/>
            <person name="Gusti V."/>
            <person name="Clausen I.G."/>
            <person name="Olsen P.B."/>
            <person name="Rasmussen M.D."/>
            <person name="Andersen J.T."/>
            <person name="Joergensen P.L."/>
            <person name="Larsen T.S."/>
            <person name="Sorokin A."/>
            <person name="Bolotin A."/>
            <person name="Lapidus A."/>
            <person name="Galleron N."/>
            <person name="Ehrlich S.D."/>
            <person name="Berka R.M."/>
        </authorList>
    </citation>
    <scope>NUCLEOTIDE SEQUENCE [LARGE SCALE GENOMIC DNA]</scope>
    <source>
        <strain>ATCC 14580 / DSM 13 / JCM 2505 / CCUG 7422 / NBRC 12200 / NCIMB 9375 / NCTC 10341 / NRRL NRS-1264 / Gibson 46</strain>
    </source>
</reference>
<feature type="chain" id="PRO_0000093751" description="GMP reductase">
    <location>
        <begin position="1"/>
        <end position="326"/>
    </location>
</feature>
<feature type="active site" description="Thioimidate intermediate" evidence="1">
    <location>
        <position position="175"/>
    </location>
</feature>
<feature type="binding site" evidence="1">
    <location>
        <begin position="204"/>
        <end position="227"/>
    </location>
    <ligand>
        <name>NADP(+)</name>
        <dbReference type="ChEBI" id="CHEBI:58349"/>
    </ligand>
</feature>
<dbReference type="EC" id="1.7.1.7" evidence="1"/>
<dbReference type="EMBL" id="AE017333">
    <property type="protein sequence ID" value="AAU40108.1"/>
    <property type="molecule type" value="Genomic_DNA"/>
</dbReference>
<dbReference type="EMBL" id="CP000002">
    <property type="protein sequence ID" value="AAU22762.1"/>
    <property type="molecule type" value="Genomic_DNA"/>
</dbReference>
<dbReference type="RefSeq" id="WP_003180544.1">
    <property type="nucleotide sequence ID" value="NC_006322.1"/>
</dbReference>
<dbReference type="SMR" id="Q65LF6"/>
<dbReference type="STRING" id="279010.BL05105"/>
<dbReference type="GeneID" id="92862217"/>
<dbReference type="KEGG" id="bld:BLi01200"/>
<dbReference type="KEGG" id="bli:BL05105"/>
<dbReference type="eggNOG" id="COG0516">
    <property type="taxonomic scope" value="Bacteria"/>
</dbReference>
<dbReference type="HOGENOM" id="CLU_022552_5_0_9"/>
<dbReference type="Proteomes" id="UP000000606">
    <property type="component" value="Chromosome"/>
</dbReference>
<dbReference type="GO" id="GO:0005829">
    <property type="term" value="C:cytosol"/>
    <property type="evidence" value="ECO:0007669"/>
    <property type="project" value="TreeGrafter"/>
</dbReference>
<dbReference type="GO" id="GO:1902560">
    <property type="term" value="C:GMP reductase complex"/>
    <property type="evidence" value="ECO:0007669"/>
    <property type="project" value="InterPro"/>
</dbReference>
<dbReference type="GO" id="GO:0003920">
    <property type="term" value="F:GMP reductase activity"/>
    <property type="evidence" value="ECO:0007669"/>
    <property type="project" value="UniProtKB-UniRule"/>
</dbReference>
<dbReference type="GO" id="GO:0006163">
    <property type="term" value="P:purine nucleotide metabolic process"/>
    <property type="evidence" value="ECO:0007669"/>
    <property type="project" value="UniProtKB-UniRule"/>
</dbReference>
<dbReference type="CDD" id="cd00381">
    <property type="entry name" value="IMPDH"/>
    <property type="match status" value="1"/>
</dbReference>
<dbReference type="FunFam" id="3.20.20.70:FF:000079">
    <property type="entry name" value="GMP reductase"/>
    <property type="match status" value="1"/>
</dbReference>
<dbReference type="Gene3D" id="3.20.20.70">
    <property type="entry name" value="Aldolase class I"/>
    <property type="match status" value="1"/>
</dbReference>
<dbReference type="HAMAP" id="MF_01511">
    <property type="entry name" value="GMP_reduct_type2"/>
    <property type="match status" value="1"/>
</dbReference>
<dbReference type="InterPro" id="IPR013785">
    <property type="entry name" value="Aldolase_TIM"/>
</dbReference>
<dbReference type="InterPro" id="IPR050139">
    <property type="entry name" value="GMP_reductase"/>
</dbReference>
<dbReference type="InterPro" id="IPR005994">
    <property type="entry name" value="GuaC_type_2"/>
</dbReference>
<dbReference type="InterPro" id="IPR015875">
    <property type="entry name" value="IMP_DH/GMP_Rdtase_CS"/>
</dbReference>
<dbReference type="InterPro" id="IPR001093">
    <property type="entry name" value="IMP_DH_GMPRt"/>
</dbReference>
<dbReference type="NCBIfam" id="TIGR01306">
    <property type="entry name" value="GMP_reduct_2"/>
    <property type="match status" value="1"/>
</dbReference>
<dbReference type="NCBIfam" id="NF003966">
    <property type="entry name" value="PRK05458.1"/>
    <property type="match status" value="1"/>
</dbReference>
<dbReference type="PANTHER" id="PTHR43170">
    <property type="entry name" value="GMP REDUCTASE"/>
    <property type="match status" value="1"/>
</dbReference>
<dbReference type="PANTHER" id="PTHR43170:SF5">
    <property type="entry name" value="GMP REDUCTASE"/>
    <property type="match status" value="1"/>
</dbReference>
<dbReference type="Pfam" id="PF00478">
    <property type="entry name" value="IMPDH"/>
    <property type="match status" value="1"/>
</dbReference>
<dbReference type="PIRSF" id="PIRSF036500">
    <property type="entry name" value="GMP_red_Firmic"/>
    <property type="match status" value="1"/>
</dbReference>
<dbReference type="SMART" id="SM01240">
    <property type="entry name" value="IMPDH"/>
    <property type="match status" value="1"/>
</dbReference>
<dbReference type="SUPFAM" id="SSF51412">
    <property type="entry name" value="Inosine monophosphate dehydrogenase (IMPDH)"/>
    <property type="match status" value="1"/>
</dbReference>
<dbReference type="PROSITE" id="PS00487">
    <property type="entry name" value="IMP_DH_GMP_RED"/>
    <property type="match status" value="1"/>
</dbReference>
<accession>Q65LF6</accession>